<evidence type="ECO:0000250" key="1">
    <source>
        <dbReference type="UniProtKB" id="P03558"/>
    </source>
</evidence>
<evidence type="ECO:0000256" key="2">
    <source>
        <dbReference type="SAM" id="MobiDB-lite"/>
    </source>
</evidence>
<evidence type="ECO:0000305" key="3"/>
<sequence length="520" mass="57746">MENIEKLIMQEKILMLELDLVRAKISLARANGSSQQGDLPLHRETPVKEEAVHSALATFTPTQVKAIPEQTAPGKESTNPLMASILPKDMNPVQTGIRLAVPGDFLRPHQGIPIPQKTDLSSTVAPLRAESGIQHPHINYYVVYNGPHAGIYDDWGCTKAATNGAPGVAHKKFATITEARAAADAYTTSQQTDRLNFIPKGEAQLKPKSFAKALTSPPKQKAHWLTLGTKRPSGDPAPKEISFAPEITMDDFLYLYDLGRKFDGEGDDTMFTTDNEKISLFNFRKNADPQMVREAYAAGLIKTIYPSNNLQEIKYLPKKVKDAVKRFRTNCIKNTEKDIFLKIRSTIPVWTIQGLLHKPRQVIEIGVSKKVVPTESKAMESKIQIEDLTELAVKTGEQSIQSLLRLNDKKKIFVNMVEHDTLVYSKNIKDTVSEDQRAMETFQQRVISGNLLGFHCPAICHFIERTVEKEGGSYKCHHCDKGKAIVQNASADSGPKDGPPPTRSIVEKEDVPTTSSKQVD</sequence>
<protein>
    <recommendedName>
        <fullName>Transactivator/viroplasmin protein</fullName>
        <shortName>Tav</shortName>
    </recommendedName>
    <alternativeName>
        <fullName>Inclusion body matrix protein</fullName>
    </alternativeName>
</protein>
<comment type="function">
    <text evidence="1">Enhances the ribosomal termination-reinitiation event leading to the translation of major open reading frames on the polycistronic viral RNAs.</text>
</comment>
<comment type="subcellular location">
    <subcellularLocation>
        <location>Host cytoplasm</location>
    </subcellularLocation>
    <text>Found in cytoplasmic occlusion bodies.</text>
</comment>
<comment type="miscellaneous">
    <text>The inclusion bodies are the site of viral DNA synthesis, virion assembly and accumulation in the infected cell.</text>
</comment>
<comment type="similarity">
    <text evidence="3">Belongs to the caulimoviridae viroplasmin family.</text>
</comment>
<organismHost>
    <name type="scientific">Arabidopsis thaliana</name>
    <name type="common">Mouse-ear cress</name>
    <dbReference type="NCBI Taxonomy" id="3702"/>
</organismHost>
<organismHost>
    <name type="scientific">Brassica</name>
    <dbReference type="NCBI Taxonomy" id="3705"/>
</organismHost>
<organismHost>
    <name type="scientific">Raphanus</name>
    <dbReference type="NCBI Taxonomy" id="3725"/>
</organismHost>
<gene>
    <name type="ORF">ORF VI</name>
</gene>
<reference key="1">
    <citation type="journal article" date="1990" name="Nucleic Acids Res.">
        <title>DNA sequence of gene VI of cauliflower mosaic virus strain PV147.</title>
        <authorList>
            <person name="Volovitch M."/>
            <person name="Modjtahedi N."/>
            <person name="Chouikh Y."/>
            <person name="Yot P."/>
        </authorList>
    </citation>
    <scope>NUCLEOTIDE SEQUENCE [GENOMIC DNA]</scope>
</reference>
<dbReference type="EMBL" id="X53860">
    <property type="protein sequence ID" value="CAA37853.1"/>
    <property type="molecule type" value="Genomic_DNA"/>
</dbReference>
<dbReference type="PIR" id="S11217">
    <property type="entry name" value="S11217"/>
</dbReference>
<dbReference type="SMR" id="P18617"/>
<dbReference type="GO" id="GO:0030430">
    <property type="term" value="C:host cell cytoplasm"/>
    <property type="evidence" value="ECO:0007669"/>
    <property type="project" value="UniProtKB-SubCell"/>
</dbReference>
<dbReference type="GO" id="GO:0006417">
    <property type="term" value="P:regulation of translation"/>
    <property type="evidence" value="ECO:0007669"/>
    <property type="project" value="UniProtKB-KW"/>
</dbReference>
<dbReference type="FunFam" id="3.40.970.10:FF:000003">
    <property type="entry name" value="Transactivator/viroplasmin protein"/>
    <property type="match status" value="1"/>
</dbReference>
<dbReference type="Gene3D" id="3.40.970.10">
    <property type="entry name" value="Ribonuclease H1, N-terminal domain"/>
    <property type="match status" value="1"/>
</dbReference>
<dbReference type="InterPro" id="IPR009027">
    <property type="entry name" value="Ribosomal_bL9/RNase_H1_N"/>
</dbReference>
<dbReference type="InterPro" id="IPR011320">
    <property type="entry name" value="RNase_H1_N"/>
</dbReference>
<dbReference type="InterPro" id="IPR037056">
    <property type="entry name" value="RNase_H1_N_sf"/>
</dbReference>
<dbReference type="Pfam" id="PF01693">
    <property type="entry name" value="Cauli_VI"/>
    <property type="match status" value="1"/>
</dbReference>
<dbReference type="SUPFAM" id="SSF55658">
    <property type="entry name" value="L9 N-domain-like"/>
    <property type="match status" value="1"/>
</dbReference>
<keyword id="KW-1035">Host cytoplasm</keyword>
<keyword id="KW-0810">Translation regulation</keyword>
<organism>
    <name type="scientific">Cauliflower mosaic virus (strain PV147)</name>
    <name type="common">CaMV</name>
    <dbReference type="NCBI Taxonomy" id="10647"/>
    <lineage>
        <taxon>Viruses</taxon>
        <taxon>Riboviria</taxon>
        <taxon>Pararnavirae</taxon>
        <taxon>Artverviricota</taxon>
        <taxon>Revtraviricetes</taxon>
        <taxon>Ortervirales</taxon>
        <taxon>Caulimoviridae</taxon>
        <taxon>Caulimovirus</taxon>
        <taxon>Caulimovirus tessellobrassicae</taxon>
    </lineage>
</organism>
<proteinExistence type="inferred from homology"/>
<accession>P18617</accession>
<feature type="chain" id="PRO_0000222044" description="Transactivator/viroplasmin protein">
    <location>
        <begin position="1"/>
        <end position="520"/>
    </location>
</feature>
<feature type="region of interest" description="Disordered" evidence="2">
    <location>
        <begin position="487"/>
        <end position="520"/>
    </location>
</feature>
<name>IBMP_CAMVP</name>